<proteinExistence type="inferred from homology"/>
<organism>
    <name type="scientific">Lysinibacillus sphaericus (strain C3-41)</name>
    <dbReference type="NCBI Taxonomy" id="444177"/>
    <lineage>
        <taxon>Bacteria</taxon>
        <taxon>Bacillati</taxon>
        <taxon>Bacillota</taxon>
        <taxon>Bacilli</taxon>
        <taxon>Bacillales</taxon>
        <taxon>Bacillaceae</taxon>
        <taxon>Lysinibacillus</taxon>
    </lineage>
</organism>
<sequence>MFRIGQGFDVHAFEEGRPLIIGGITIPHEKGLVGHSDADVLLHTVTDAALGAIGEGDIGRHFPDTDPAFKDADSAKLLEYIWKIVEDKGYILGNVDCTIMAQRPKMAPYIEQMQNRIAELLHAEPSQVNVKATTTERLGFTGREEGIAAMATILLMKK</sequence>
<protein>
    <recommendedName>
        <fullName evidence="1">2-C-methyl-D-erythritol 2,4-cyclodiphosphate synthase</fullName>
        <shortName evidence="1">MECDP-synthase</shortName>
        <shortName evidence="1">MECPP-synthase</shortName>
        <shortName evidence="1">MECPS</shortName>
        <ecNumber evidence="1">4.6.1.12</ecNumber>
    </recommendedName>
</protein>
<evidence type="ECO:0000255" key="1">
    <source>
        <dbReference type="HAMAP-Rule" id="MF_00107"/>
    </source>
</evidence>
<dbReference type="EC" id="4.6.1.12" evidence="1"/>
<dbReference type="EMBL" id="CP000817">
    <property type="protein sequence ID" value="ACA42089.1"/>
    <property type="molecule type" value="Genomic_DNA"/>
</dbReference>
<dbReference type="RefSeq" id="WP_008180601.1">
    <property type="nucleotide sequence ID" value="NC_010382.1"/>
</dbReference>
<dbReference type="SMR" id="B1HNM6"/>
<dbReference type="EnsemblBacteria" id="ACA42089">
    <property type="protein sequence ID" value="ACA42089"/>
    <property type="gene ID" value="Bsph_4645"/>
</dbReference>
<dbReference type="KEGG" id="lsp:Bsph_4645"/>
<dbReference type="HOGENOM" id="CLU_084630_2_0_9"/>
<dbReference type="UniPathway" id="UPA00056">
    <property type="reaction ID" value="UER00095"/>
</dbReference>
<dbReference type="Proteomes" id="UP000002164">
    <property type="component" value="Chromosome"/>
</dbReference>
<dbReference type="GO" id="GO:0008685">
    <property type="term" value="F:2-C-methyl-D-erythritol 2,4-cyclodiphosphate synthase activity"/>
    <property type="evidence" value="ECO:0007669"/>
    <property type="project" value="UniProtKB-UniRule"/>
</dbReference>
<dbReference type="GO" id="GO:0046872">
    <property type="term" value="F:metal ion binding"/>
    <property type="evidence" value="ECO:0007669"/>
    <property type="project" value="UniProtKB-KW"/>
</dbReference>
<dbReference type="GO" id="GO:0019288">
    <property type="term" value="P:isopentenyl diphosphate biosynthetic process, methylerythritol 4-phosphate pathway"/>
    <property type="evidence" value="ECO:0007669"/>
    <property type="project" value="UniProtKB-UniRule"/>
</dbReference>
<dbReference type="GO" id="GO:0016114">
    <property type="term" value="P:terpenoid biosynthetic process"/>
    <property type="evidence" value="ECO:0007669"/>
    <property type="project" value="InterPro"/>
</dbReference>
<dbReference type="CDD" id="cd00554">
    <property type="entry name" value="MECDP_synthase"/>
    <property type="match status" value="1"/>
</dbReference>
<dbReference type="FunFam" id="3.30.1330.50:FF:000001">
    <property type="entry name" value="2-C-methyl-D-erythritol 2,4-cyclodiphosphate synthase"/>
    <property type="match status" value="1"/>
</dbReference>
<dbReference type="Gene3D" id="3.30.1330.50">
    <property type="entry name" value="2-C-methyl-D-erythritol 2,4-cyclodiphosphate synthase"/>
    <property type="match status" value="1"/>
</dbReference>
<dbReference type="HAMAP" id="MF_00107">
    <property type="entry name" value="IspF"/>
    <property type="match status" value="1"/>
</dbReference>
<dbReference type="InterPro" id="IPR003526">
    <property type="entry name" value="MECDP_synthase"/>
</dbReference>
<dbReference type="InterPro" id="IPR020555">
    <property type="entry name" value="MECDP_synthase_CS"/>
</dbReference>
<dbReference type="InterPro" id="IPR036571">
    <property type="entry name" value="MECDP_synthase_sf"/>
</dbReference>
<dbReference type="NCBIfam" id="TIGR00151">
    <property type="entry name" value="ispF"/>
    <property type="match status" value="1"/>
</dbReference>
<dbReference type="PANTHER" id="PTHR43181">
    <property type="entry name" value="2-C-METHYL-D-ERYTHRITOL 2,4-CYCLODIPHOSPHATE SYNTHASE, CHLOROPLASTIC"/>
    <property type="match status" value="1"/>
</dbReference>
<dbReference type="PANTHER" id="PTHR43181:SF1">
    <property type="entry name" value="2-C-METHYL-D-ERYTHRITOL 2,4-CYCLODIPHOSPHATE SYNTHASE, CHLOROPLASTIC"/>
    <property type="match status" value="1"/>
</dbReference>
<dbReference type="Pfam" id="PF02542">
    <property type="entry name" value="YgbB"/>
    <property type="match status" value="1"/>
</dbReference>
<dbReference type="SUPFAM" id="SSF69765">
    <property type="entry name" value="IpsF-like"/>
    <property type="match status" value="1"/>
</dbReference>
<dbReference type="PROSITE" id="PS01350">
    <property type="entry name" value="ISPF"/>
    <property type="match status" value="1"/>
</dbReference>
<reference key="1">
    <citation type="journal article" date="2008" name="J. Bacteriol.">
        <title>Complete genome sequence of the mosquitocidal bacterium Bacillus sphaericus C3-41 and comparison with those of closely related Bacillus species.</title>
        <authorList>
            <person name="Hu X."/>
            <person name="Fan W."/>
            <person name="Han B."/>
            <person name="Liu H."/>
            <person name="Zheng D."/>
            <person name="Li Q."/>
            <person name="Dong W."/>
            <person name="Yan J."/>
            <person name="Gao M."/>
            <person name="Berry C."/>
            <person name="Yuan Z."/>
        </authorList>
    </citation>
    <scope>NUCLEOTIDE SEQUENCE [LARGE SCALE GENOMIC DNA]</scope>
    <source>
        <strain>C3-41</strain>
    </source>
</reference>
<accession>B1HNM6</accession>
<comment type="function">
    <text evidence="1">Involved in the biosynthesis of isopentenyl diphosphate (IPP) and dimethylallyl diphosphate (DMAPP), two major building blocks of isoprenoid compounds. Catalyzes the conversion of 4-diphosphocytidyl-2-C-methyl-D-erythritol 2-phosphate (CDP-ME2P) to 2-C-methyl-D-erythritol 2,4-cyclodiphosphate (ME-CPP) with a corresponding release of cytidine 5-monophosphate (CMP).</text>
</comment>
<comment type="catalytic activity">
    <reaction evidence="1">
        <text>4-CDP-2-C-methyl-D-erythritol 2-phosphate = 2-C-methyl-D-erythritol 2,4-cyclic diphosphate + CMP</text>
        <dbReference type="Rhea" id="RHEA:23864"/>
        <dbReference type="ChEBI" id="CHEBI:57919"/>
        <dbReference type="ChEBI" id="CHEBI:58483"/>
        <dbReference type="ChEBI" id="CHEBI:60377"/>
        <dbReference type="EC" id="4.6.1.12"/>
    </reaction>
</comment>
<comment type="cofactor">
    <cofactor evidence="1">
        <name>a divalent metal cation</name>
        <dbReference type="ChEBI" id="CHEBI:60240"/>
    </cofactor>
    <text evidence="1">Binds 1 divalent metal cation per subunit.</text>
</comment>
<comment type="pathway">
    <text evidence="1">Isoprenoid biosynthesis; isopentenyl diphosphate biosynthesis via DXP pathway; isopentenyl diphosphate from 1-deoxy-D-xylulose 5-phosphate: step 4/6.</text>
</comment>
<comment type="subunit">
    <text evidence="1">Homotrimer.</text>
</comment>
<comment type="similarity">
    <text evidence="1">Belongs to the IspF family.</text>
</comment>
<name>ISPF_LYSSC</name>
<keyword id="KW-0414">Isoprene biosynthesis</keyword>
<keyword id="KW-0456">Lyase</keyword>
<keyword id="KW-0479">Metal-binding</keyword>
<feature type="chain" id="PRO_1000094271" description="2-C-methyl-D-erythritol 2,4-cyclodiphosphate synthase">
    <location>
        <begin position="1"/>
        <end position="158"/>
    </location>
</feature>
<feature type="binding site" evidence="1">
    <location>
        <begin position="9"/>
        <end position="11"/>
    </location>
    <ligand>
        <name>4-CDP-2-C-methyl-D-erythritol 2-phosphate</name>
        <dbReference type="ChEBI" id="CHEBI:57919"/>
    </ligand>
</feature>
<feature type="binding site" evidence="1">
    <location>
        <position position="9"/>
    </location>
    <ligand>
        <name>a divalent metal cation</name>
        <dbReference type="ChEBI" id="CHEBI:60240"/>
    </ligand>
</feature>
<feature type="binding site" evidence="1">
    <location>
        <position position="11"/>
    </location>
    <ligand>
        <name>a divalent metal cation</name>
        <dbReference type="ChEBI" id="CHEBI:60240"/>
    </ligand>
</feature>
<feature type="binding site" evidence="1">
    <location>
        <begin position="35"/>
        <end position="36"/>
    </location>
    <ligand>
        <name>4-CDP-2-C-methyl-D-erythritol 2-phosphate</name>
        <dbReference type="ChEBI" id="CHEBI:57919"/>
    </ligand>
</feature>
<feature type="binding site" evidence="1">
    <location>
        <position position="43"/>
    </location>
    <ligand>
        <name>a divalent metal cation</name>
        <dbReference type="ChEBI" id="CHEBI:60240"/>
    </ligand>
</feature>
<feature type="binding site" evidence="1">
    <location>
        <begin position="57"/>
        <end position="59"/>
    </location>
    <ligand>
        <name>4-CDP-2-C-methyl-D-erythritol 2-phosphate</name>
        <dbReference type="ChEBI" id="CHEBI:57919"/>
    </ligand>
</feature>
<feature type="binding site" evidence="1">
    <location>
        <begin position="62"/>
        <end position="66"/>
    </location>
    <ligand>
        <name>4-CDP-2-C-methyl-D-erythritol 2-phosphate</name>
        <dbReference type="ChEBI" id="CHEBI:57919"/>
    </ligand>
</feature>
<feature type="binding site" evidence="1">
    <location>
        <begin position="101"/>
        <end position="107"/>
    </location>
    <ligand>
        <name>4-CDP-2-C-methyl-D-erythritol 2-phosphate</name>
        <dbReference type="ChEBI" id="CHEBI:57919"/>
    </ligand>
</feature>
<feature type="binding site" evidence="1">
    <location>
        <begin position="133"/>
        <end position="136"/>
    </location>
    <ligand>
        <name>4-CDP-2-C-methyl-D-erythritol 2-phosphate</name>
        <dbReference type="ChEBI" id="CHEBI:57919"/>
    </ligand>
</feature>
<feature type="binding site" evidence="1">
    <location>
        <position position="140"/>
    </location>
    <ligand>
        <name>4-CDP-2-C-methyl-D-erythritol 2-phosphate</name>
        <dbReference type="ChEBI" id="CHEBI:57919"/>
    </ligand>
</feature>
<feature type="binding site" evidence="1">
    <location>
        <position position="143"/>
    </location>
    <ligand>
        <name>4-CDP-2-C-methyl-D-erythritol 2-phosphate</name>
        <dbReference type="ChEBI" id="CHEBI:57919"/>
    </ligand>
</feature>
<feature type="site" description="Transition state stabilizer" evidence="1">
    <location>
        <position position="35"/>
    </location>
</feature>
<feature type="site" description="Transition state stabilizer" evidence="1">
    <location>
        <position position="134"/>
    </location>
</feature>
<gene>
    <name evidence="1" type="primary">ispF</name>
    <name type="ordered locus">Bsph_4645</name>
</gene>